<evidence type="ECO:0000305" key="1"/>
<name>CYC2_RUBGE</name>
<comment type="function">
    <text>Cytochrome c2 is found mainly in purple, non-sulfur, photosynthetic bacteria where it functions as the electron donor to the oxidized bacteriochlorophyll in the photophosphorylation pathway. However, it may also have a role in the respiratory chain and is found in some non-photosynthetic bacteria.</text>
</comment>
<comment type="PTM">
    <text>Binds 1 heme c group covalently per subunit.</text>
</comment>
<comment type="similarity">
    <text evidence="1">Belongs to the cytochrome c family.</text>
</comment>
<dbReference type="PIR" id="A00089">
    <property type="entry name" value="CCRFG2"/>
</dbReference>
<dbReference type="SMR" id="P00097"/>
<dbReference type="GO" id="GO:0009055">
    <property type="term" value="F:electron transfer activity"/>
    <property type="evidence" value="ECO:0007669"/>
    <property type="project" value="InterPro"/>
</dbReference>
<dbReference type="GO" id="GO:0020037">
    <property type="term" value="F:heme binding"/>
    <property type="evidence" value="ECO:0007669"/>
    <property type="project" value="InterPro"/>
</dbReference>
<dbReference type="GO" id="GO:0005506">
    <property type="term" value="F:iron ion binding"/>
    <property type="evidence" value="ECO:0007669"/>
    <property type="project" value="InterPro"/>
</dbReference>
<dbReference type="GO" id="GO:0015979">
    <property type="term" value="P:photosynthesis"/>
    <property type="evidence" value="ECO:0007669"/>
    <property type="project" value="UniProtKB-KW"/>
</dbReference>
<dbReference type="Gene3D" id="1.10.760.10">
    <property type="entry name" value="Cytochrome c-like domain"/>
    <property type="match status" value="1"/>
</dbReference>
<dbReference type="InterPro" id="IPR009056">
    <property type="entry name" value="Cyt_c-like_dom"/>
</dbReference>
<dbReference type="InterPro" id="IPR036909">
    <property type="entry name" value="Cyt_c-like_dom_sf"/>
</dbReference>
<dbReference type="InterPro" id="IPR002324">
    <property type="entry name" value="Cyt_c_ID"/>
</dbReference>
<dbReference type="Pfam" id="PF00034">
    <property type="entry name" value="Cytochrom_C"/>
    <property type="match status" value="1"/>
</dbReference>
<dbReference type="PRINTS" id="PR00606">
    <property type="entry name" value="CYTCHROMECID"/>
</dbReference>
<dbReference type="SUPFAM" id="SSF46626">
    <property type="entry name" value="Cytochrome c"/>
    <property type="match status" value="1"/>
</dbReference>
<dbReference type="PROSITE" id="PS51007">
    <property type="entry name" value="CYTC"/>
    <property type="match status" value="1"/>
</dbReference>
<feature type="chain" id="PRO_0000108343" description="Cytochrome c2">
    <location>
        <begin position="1"/>
        <end position="85"/>
    </location>
</feature>
<feature type="binding site" description="covalent">
    <location>
        <position position="12"/>
    </location>
    <ligand>
        <name>heme c</name>
        <dbReference type="ChEBI" id="CHEBI:61717"/>
    </ligand>
</feature>
<feature type="binding site" description="covalent">
    <location>
        <position position="15"/>
    </location>
    <ligand>
        <name>heme c</name>
        <dbReference type="ChEBI" id="CHEBI:61717"/>
    </ligand>
</feature>
<feature type="binding site" description="axial binding residue">
    <location>
        <position position="16"/>
    </location>
    <ligand>
        <name>heme c</name>
        <dbReference type="ChEBI" id="CHEBI:61717"/>
    </ligand>
    <ligandPart>
        <name>Fe</name>
        <dbReference type="ChEBI" id="CHEBI:18248"/>
    </ligandPart>
</feature>
<feature type="binding site" description="axial binding residue">
    <location>
        <position position="61"/>
    </location>
    <ligand>
        <name>heme c</name>
        <dbReference type="ChEBI" id="CHEBI:61717"/>
    </ligand>
    <ligandPart>
        <name>Fe</name>
        <dbReference type="ChEBI" id="CHEBI:18248"/>
    </ligandPart>
</feature>
<reference key="1">
    <citation type="journal article" date="1979" name="Nature">
        <title>Anomalies in amino acid sequences of small cytochromes c and cytochromes c' from two species of purple photosynthetic bacteria.</title>
        <authorList>
            <person name="Ambler R.P."/>
            <person name="Meyer T.E."/>
            <person name="Kamen M.D."/>
        </authorList>
    </citation>
    <scope>PROTEIN SEQUENCE</scope>
</reference>
<protein>
    <recommendedName>
        <fullName>Cytochrome c2</fullName>
    </recommendedName>
</protein>
<sequence length="85" mass="8899">ATPAELATKAGCAVCHQPTAKGLGPSYQEIAKKYKGQAGAPALMAERVRKGSVGIFGKLPMTPTPPARISDADLKLVIDWILKTP</sequence>
<keyword id="KW-0903">Direct protein sequencing</keyword>
<keyword id="KW-0249">Electron transport</keyword>
<keyword id="KW-0349">Heme</keyword>
<keyword id="KW-0408">Iron</keyword>
<keyword id="KW-0479">Metal-binding</keyword>
<keyword id="KW-0602">Photosynthesis</keyword>
<keyword id="KW-0813">Transport</keyword>
<proteinExistence type="evidence at protein level"/>
<organism>
    <name type="scientific">Rubrivivax gelatinosus</name>
    <name type="common">Rhodocyclus gelatinosus</name>
    <name type="synonym">Rhodopseudomonas gelatinosa</name>
    <dbReference type="NCBI Taxonomy" id="28068"/>
    <lineage>
        <taxon>Bacteria</taxon>
        <taxon>Pseudomonadati</taxon>
        <taxon>Pseudomonadota</taxon>
        <taxon>Betaproteobacteria</taxon>
        <taxon>Burkholderiales</taxon>
        <taxon>Sphaerotilaceae</taxon>
        <taxon>Rubrivivax</taxon>
    </lineage>
</organism>
<accession>P00097</accession>